<evidence type="ECO:0000255" key="1">
    <source>
        <dbReference type="HAMAP-Rule" id="MF_01615"/>
    </source>
</evidence>
<comment type="function">
    <text evidence="1">Catalyzes the hydrolysis of glutamine to glutamate and ammonia as part of the biosynthesis of pyridoxal 5'-phosphate. The resulting ammonia molecule is channeled to the active site of PdxS.</text>
</comment>
<comment type="catalytic activity">
    <reaction evidence="1">
        <text>aldehydo-D-ribose 5-phosphate + D-glyceraldehyde 3-phosphate + L-glutamine = pyridoxal 5'-phosphate + L-glutamate + phosphate + 3 H2O + H(+)</text>
        <dbReference type="Rhea" id="RHEA:31507"/>
        <dbReference type="ChEBI" id="CHEBI:15377"/>
        <dbReference type="ChEBI" id="CHEBI:15378"/>
        <dbReference type="ChEBI" id="CHEBI:29985"/>
        <dbReference type="ChEBI" id="CHEBI:43474"/>
        <dbReference type="ChEBI" id="CHEBI:58273"/>
        <dbReference type="ChEBI" id="CHEBI:58359"/>
        <dbReference type="ChEBI" id="CHEBI:59776"/>
        <dbReference type="ChEBI" id="CHEBI:597326"/>
        <dbReference type="EC" id="4.3.3.6"/>
    </reaction>
</comment>
<comment type="catalytic activity">
    <reaction evidence="1">
        <text>L-glutamine + H2O = L-glutamate + NH4(+)</text>
        <dbReference type="Rhea" id="RHEA:15889"/>
        <dbReference type="ChEBI" id="CHEBI:15377"/>
        <dbReference type="ChEBI" id="CHEBI:28938"/>
        <dbReference type="ChEBI" id="CHEBI:29985"/>
        <dbReference type="ChEBI" id="CHEBI:58359"/>
        <dbReference type="EC" id="3.5.1.2"/>
    </reaction>
</comment>
<comment type="pathway">
    <text evidence="1">Cofactor biosynthesis; pyridoxal 5'-phosphate biosynthesis.</text>
</comment>
<comment type="subunit">
    <text evidence="1">In the presence of PdxS, forms a dodecamer of heterodimers. Only shows activity in the heterodimer.</text>
</comment>
<comment type="similarity">
    <text evidence="1">Belongs to the glutaminase PdxT/SNO family.</text>
</comment>
<gene>
    <name evidence="1" type="primary">pdxT</name>
    <name type="ordered locus">Aflv_0012</name>
</gene>
<sequence>MVKIGVLGLQGAVREHVRSIEACGAEAVVIKKVEQLTQIDGLIIPGGESTTMRRLMDKYGFIEPLKQFAREGKPMFGTCAGLIILAKKIVGYDEPHLGLMDITVERNSFGRQRESFEASLAIKGVADDFIGVFIRAPHIVSVGADVDVLATYEDRIVAARQGQFLGCSFHPELTDDHRMTQYFINMVKETKE</sequence>
<dbReference type="EC" id="4.3.3.6" evidence="1"/>
<dbReference type="EC" id="3.5.1.2" evidence="1"/>
<dbReference type="EMBL" id="CP000922">
    <property type="protein sequence ID" value="ACJ32396.1"/>
    <property type="molecule type" value="Genomic_DNA"/>
</dbReference>
<dbReference type="RefSeq" id="WP_012573786.1">
    <property type="nucleotide sequence ID" value="NC_011567.1"/>
</dbReference>
<dbReference type="SMR" id="B7GFL9"/>
<dbReference type="STRING" id="491915.Aflv_0012"/>
<dbReference type="MEROPS" id="C26.A32"/>
<dbReference type="GeneID" id="7036199"/>
<dbReference type="KEGG" id="afl:Aflv_0012"/>
<dbReference type="PATRIC" id="fig|491915.6.peg.13"/>
<dbReference type="eggNOG" id="COG0311">
    <property type="taxonomic scope" value="Bacteria"/>
</dbReference>
<dbReference type="HOGENOM" id="CLU_069674_2_0_9"/>
<dbReference type="UniPathway" id="UPA00245"/>
<dbReference type="Proteomes" id="UP000000742">
    <property type="component" value="Chromosome"/>
</dbReference>
<dbReference type="GO" id="GO:0005829">
    <property type="term" value="C:cytosol"/>
    <property type="evidence" value="ECO:0007669"/>
    <property type="project" value="TreeGrafter"/>
</dbReference>
<dbReference type="GO" id="GO:1903600">
    <property type="term" value="C:glutaminase complex"/>
    <property type="evidence" value="ECO:0007669"/>
    <property type="project" value="TreeGrafter"/>
</dbReference>
<dbReference type="GO" id="GO:0004359">
    <property type="term" value="F:glutaminase activity"/>
    <property type="evidence" value="ECO:0007669"/>
    <property type="project" value="UniProtKB-UniRule"/>
</dbReference>
<dbReference type="GO" id="GO:0036381">
    <property type="term" value="F:pyridoxal 5'-phosphate synthase (glutamine hydrolysing) activity"/>
    <property type="evidence" value="ECO:0007669"/>
    <property type="project" value="UniProtKB-UniRule"/>
</dbReference>
<dbReference type="GO" id="GO:0006543">
    <property type="term" value="P:glutamine catabolic process"/>
    <property type="evidence" value="ECO:0007669"/>
    <property type="project" value="UniProtKB-UniRule"/>
</dbReference>
<dbReference type="GO" id="GO:0042823">
    <property type="term" value="P:pyridoxal phosphate biosynthetic process"/>
    <property type="evidence" value="ECO:0007669"/>
    <property type="project" value="UniProtKB-UniRule"/>
</dbReference>
<dbReference type="GO" id="GO:0008614">
    <property type="term" value="P:pyridoxine metabolic process"/>
    <property type="evidence" value="ECO:0007669"/>
    <property type="project" value="TreeGrafter"/>
</dbReference>
<dbReference type="CDD" id="cd01749">
    <property type="entry name" value="GATase1_PB"/>
    <property type="match status" value="1"/>
</dbReference>
<dbReference type="FunFam" id="3.40.50.880:FF:000010">
    <property type="entry name" value="uncharacterized protein LOC100176842 isoform X2"/>
    <property type="match status" value="1"/>
</dbReference>
<dbReference type="Gene3D" id="3.40.50.880">
    <property type="match status" value="1"/>
</dbReference>
<dbReference type="HAMAP" id="MF_01615">
    <property type="entry name" value="PdxT"/>
    <property type="match status" value="1"/>
</dbReference>
<dbReference type="InterPro" id="IPR029062">
    <property type="entry name" value="Class_I_gatase-like"/>
</dbReference>
<dbReference type="InterPro" id="IPR002161">
    <property type="entry name" value="PdxT/SNO"/>
</dbReference>
<dbReference type="InterPro" id="IPR021196">
    <property type="entry name" value="PdxT/SNO_CS"/>
</dbReference>
<dbReference type="NCBIfam" id="TIGR03800">
    <property type="entry name" value="PLP_synth_Pdx2"/>
    <property type="match status" value="1"/>
</dbReference>
<dbReference type="PANTHER" id="PTHR31559">
    <property type="entry name" value="PYRIDOXAL 5'-PHOSPHATE SYNTHASE SUBUNIT SNO"/>
    <property type="match status" value="1"/>
</dbReference>
<dbReference type="PANTHER" id="PTHR31559:SF0">
    <property type="entry name" value="PYRIDOXAL 5'-PHOSPHATE SYNTHASE SUBUNIT SNO1-RELATED"/>
    <property type="match status" value="1"/>
</dbReference>
<dbReference type="Pfam" id="PF01174">
    <property type="entry name" value="SNO"/>
    <property type="match status" value="1"/>
</dbReference>
<dbReference type="PIRSF" id="PIRSF005639">
    <property type="entry name" value="Glut_amidoT_SNO"/>
    <property type="match status" value="1"/>
</dbReference>
<dbReference type="SUPFAM" id="SSF52317">
    <property type="entry name" value="Class I glutamine amidotransferase-like"/>
    <property type="match status" value="1"/>
</dbReference>
<dbReference type="PROSITE" id="PS01236">
    <property type="entry name" value="PDXT_SNO_1"/>
    <property type="match status" value="1"/>
</dbReference>
<dbReference type="PROSITE" id="PS51130">
    <property type="entry name" value="PDXT_SNO_2"/>
    <property type="match status" value="1"/>
</dbReference>
<organism>
    <name type="scientific">Anoxybacillus flavithermus (strain DSM 21510 / WK1)</name>
    <dbReference type="NCBI Taxonomy" id="491915"/>
    <lineage>
        <taxon>Bacteria</taxon>
        <taxon>Bacillati</taxon>
        <taxon>Bacillota</taxon>
        <taxon>Bacilli</taxon>
        <taxon>Bacillales</taxon>
        <taxon>Anoxybacillaceae</taxon>
        <taxon>Anoxybacillus</taxon>
    </lineage>
</organism>
<reference key="1">
    <citation type="journal article" date="2008" name="Genome Biol.">
        <title>Encapsulated in silica: genome, proteome and physiology of the thermophilic bacterium Anoxybacillus flavithermus WK1.</title>
        <authorList>
            <person name="Saw J.H."/>
            <person name="Mountain B.W."/>
            <person name="Feng L."/>
            <person name="Omelchenko M.V."/>
            <person name="Hou S."/>
            <person name="Saito J.A."/>
            <person name="Stott M.B."/>
            <person name="Li D."/>
            <person name="Zhao G."/>
            <person name="Wu J."/>
            <person name="Galperin M.Y."/>
            <person name="Koonin E.V."/>
            <person name="Makarova K.S."/>
            <person name="Wolf Y.I."/>
            <person name="Rigden D.J."/>
            <person name="Dunfield P.F."/>
            <person name="Wang L."/>
            <person name="Alam M."/>
        </authorList>
    </citation>
    <scope>NUCLEOTIDE SEQUENCE [LARGE SCALE GENOMIC DNA]</scope>
    <source>
        <strain>DSM 21510 / WK1</strain>
    </source>
</reference>
<accession>B7GFL9</accession>
<keyword id="KW-0315">Glutamine amidotransferase</keyword>
<keyword id="KW-0378">Hydrolase</keyword>
<keyword id="KW-0456">Lyase</keyword>
<keyword id="KW-0663">Pyridoxal phosphate</keyword>
<proteinExistence type="inferred from homology"/>
<feature type="chain" id="PRO_1000215713" description="Pyridoxal 5'-phosphate synthase subunit PdxT">
    <location>
        <begin position="1"/>
        <end position="192"/>
    </location>
</feature>
<feature type="active site" description="Nucleophile" evidence="1">
    <location>
        <position position="79"/>
    </location>
</feature>
<feature type="active site" description="Charge relay system" evidence="1">
    <location>
        <position position="170"/>
    </location>
</feature>
<feature type="active site" description="Charge relay system" evidence="1">
    <location>
        <position position="172"/>
    </location>
</feature>
<feature type="binding site" evidence="1">
    <location>
        <begin position="47"/>
        <end position="49"/>
    </location>
    <ligand>
        <name>L-glutamine</name>
        <dbReference type="ChEBI" id="CHEBI:58359"/>
    </ligand>
</feature>
<feature type="binding site" evidence="1">
    <location>
        <position position="106"/>
    </location>
    <ligand>
        <name>L-glutamine</name>
        <dbReference type="ChEBI" id="CHEBI:58359"/>
    </ligand>
</feature>
<feature type="binding site" evidence="1">
    <location>
        <begin position="134"/>
        <end position="135"/>
    </location>
    <ligand>
        <name>L-glutamine</name>
        <dbReference type="ChEBI" id="CHEBI:58359"/>
    </ligand>
</feature>
<name>PDXT_ANOFW</name>
<protein>
    <recommendedName>
        <fullName evidence="1">Pyridoxal 5'-phosphate synthase subunit PdxT</fullName>
        <ecNumber evidence="1">4.3.3.6</ecNumber>
    </recommendedName>
    <alternativeName>
        <fullName evidence="1">Pdx2</fullName>
    </alternativeName>
    <alternativeName>
        <fullName evidence="1">Pyridoxal 5'-phosphate synthase glutaminase subunit</fullName>
        <ecNumber evidence="1">3.5.1.2</ecNumber>
    </alternativeName>
</protein>